<sequence>MPRVKRGVTARARHKKVLKLAKGYYGARSRTYRVAVQAVTKAGQYAYRDRRQKKRQFRQLWIARINAAARQNGLSYSRFINGLKKASIEIDRKILADIAVFDKVVFATLVEKAKEALN</sequence>
<keyword id="KW-0687">Ribonucleoprotein</keyword>
<keyword id="KW-0689">Ribosomal protein</keyword>
<keyword id="KW-0694">RNA-binding</keyword>
<keyword id="KW-0699">rRNA-binding</keyword>
<protein>
    <recommendedName>
        <fullName evidence="1">Large ribosomal subunit protein bL20</fullName>
    </recommendedName>
    <alternativeName>
        <fullName evidence="2">50S ribosomal protein L20</fullName>
    </alternativeName>
</protein>
<evidence type="ECO:0000255" key="1">
    <source>
        <dbReference type="HAMAP-Rule" id="MF_00382"/>
    </source>
</evidence>
<evidence type="ECO:0000305" key="2"/>
<accession>A9L2Q6</accession>
<proteinExistence type="inferred from homology"/>
<comment type="function">
    <text evidence="1">Binds directly to 23S ribosomal RNA and is necessary for the in vitro assembly process of the 50S ribosomal subunit. It is not involved in the protein synthesizing functions of that subunit.</text>
</comment>
<comment type="similarity">
    <text evidence="1">Belongs to the bacterial ribosomal protein bL20 family.</text>
</comment>
<organism>
    <name type="scientific">Shewanella baltica (strain OS195)</name>
    <dbReference type="NCBI Taxonomy" id="399599"/>
    <lineage>
        <taxon>Bacteria</taxon>
        <taxon>Pseudomonadati</taxon>
        <taxon>Pseudomonadota</taxon>
        <taxon>Gammaproteobacteria</taxon>
        <taxon>Alteromonadales</taxon>
        <taxon>Shewanellaceae</taxon>
        <taxon>Shewanella</taxon>
    </lineage>
</organism>
<name>RL20_SHEB9</name>
<feature type="chain" id="PRO_1000080094" description="Large ribosomal subunit protein bL20">
    <location>
        <begin position="1"/>
        <end position="118"/>
    </location>
</feature>
<reference key="1">
    <citation type="submission" date="2007-11" db="EMBL/GenBank/DDBJ databases">
        <title>Complete sequence of chromosome of Shewanella baltica OS195.</title>
        <authorList>
            <consortium name="US DOE Joint Genome Institute"/>
            <person name="Copeland A."/>
            <person name="Lucas S."/>
            <person name="Lapidus A."/>
            <person name="Barry K."/>
            <person name="Glavina del Rio T."/>
            <person name="Dalin E."/>
            <person name="Tice H."/>
            <person name="Pitluck S."/>
            <person name="Chain P."/>
            <person name="Malfatti S."/>
            <person name="Shin M."/>
            <person name="Vergez L."/>
            <person name="Schmutz J."/>
            <person name="Larimer F."/>
            <person name="Land M."/>
            <person name="Hauser L."/>
            <person name="Kyrpides N."/>
            <person name="Kim E."/>
            <person name="Brettar I."/>
            <person name="Rodrigues J."/>
            <person name="Konstantinidis K."/>
            <person name="Klappenbach J."/>
            <person name="Hofle M."/>
            <person name="Tiedje J."/>
            <person name="Richardson P."/>
        </authorList>
    </citation>
    <scope>NUCLEOTIDE SEQUENCE [LARGE SCALE GENOMIC DNA]</scope>
    <source>
        <strain>OS195</strain>
    </source>
</reference>
<dbReference type="EMBL" id="CP000891">
    <property type="protein sequence ID" value="ABX49495.1"/>
    <property type="molecule type" value="Genomic_DNA"/>
</dbReference>
<dbReference type="RefSeq" id="WP_006081652.1">
    <property type="nucleotide sequence ID" value="NC_009997.1"/>
</dbReference>
<dbReference type="SMR" id="A9L2Q6"/>
<dbReference type="GeneID" id="94727990"/>
<dbReference type="KEGG" id="sbn:Sbal195_2327"/>
<dbReference type="HOGENOM" id="CLU_123265_0_1_6"/>
<dbReference type="Proteomes" id="UP000000770">
    <property type="component" value="Chromosome"/>
</dbReference>
<dbReference type="GO" id="GO:1990904">
    <property type="term" value="C:ribonucleoprotein complex"/>
    <property type="evidence" value="ECO:0007669"/>
    <property type="project" value="UniProtKB-KW"/>
</dbReference>
<dbReference type="GO" id="GO:0005840">
    <property type="term" value="C:ribosome"/>
    <property type="evidence" value="ECO:0007669"/>
    <property type="project" value="UniProtKB-KW"/>
</dbReference>
<dbReference type="GO" id="GO:0019843">
    <property type="term" value="F:rRNA binding"/>
    <property type="evidence" value="ECO:0007669"/>
    <property type="project" value="UniProtKB-UniRule"/>
</dbReference>
<dbReference type="GO" id="GO:0003735">
    <property type="term" value="F:structural constituent of ribosome"/>
    <property type="evidence" value="ECO:0007669"/>
    <property type="project" value="InterPro"/>
</dbReference>
<dbReference type="GO" id="GO:0000027">
    <property type="term" value="P:ribosomal large subunit assembly"/>
    <property type="evidence" value="ECO:0007669"/>
    <property type="project" value="UniProtKB-UniRule"/>
</dbReference>
<dbReference type="GO" id="GO:0006412">
    <property type="term" value="P:translation"/>
    <property type="evidence" value="ECO:0007669"/>
    <property type="project" value="InterPro"/>
</dbReference>
<dbReference type="CDD" id="cd07026">
    <property type="entry name" value="Ribosomal_L20"/>
    <property type="match status" value="1"/>
</dbReference>
<dbReference type="FunFam" id="1.10.1900.20:FF:000001">
    <property type="entry name" value="50S ribosomal protein L20"/>
    <property type="match status" value="1"/>
</dbReference>
<dbReference type="Gene3D" id="6.10.160.10">
    <property type="match status" value="1"/>
</dbReference>
<dbReference type="Gene3D" id="1.10.1900.20">
    <property type="entry name" value="Ribosomal protein L20"/>
    <property type="match status" value="1"/>
</dbReference>
<dbReference type="HAMAP" id="MF_00382">
    <property type="entry name" value="Ribosomal_bL20"/>
    <property type="match status" value="1"/>
</dbReference>
<dbReference type="InterPro" id="IPR005813">
    <property type="entry name" value="Ribosomal_bL20"/>
</dbReference>
<dbReference type="InterPro" id="IPR049946">
    <property type="entry name" value="RIBOSOMAL_L20_CS"/>
</dbReference>
<dbReference type="InterPro" id="IPR035566">
    <property type="entry name" value="Ribosomal_protein_bL20_C"/>
</dbReference>
<dbReference type="NCBIfam" id="TIGR01032">
    <property type="entry name" value="rplT_bact"/>
    <property type="match status" value="1"/>
</dbReference>
<dbReference type="PANTHER" id="PTHR10986">
    <property type="entry name" value="39S RIBOSOMAL PROTEIN L20"/>
    <property type="match status" value="1"/>
</dbReference>
<dbReference type="Pfam" id="PF00453">
    <property type="entry name" value="Ribosomal_L20"/>
    <property type="match status" value="1"/>
</dbReference>
<dbReference type="PRINTS" id="PR00062">
    <property type="entry name" value="RIBOSOMALL20"/>
</dbReference>
<dbReference type="SUPFAM" id="SSF74731">
    <property type="entry name" value="Ribosomal protein L20"/>
    <property type="match status" value="1"/>
</dbReference>
<dbReference type="PROSITE" id="PS00937">
    <property type="entry name" value="RIBOSOMAL_L20"/>
    <property type="match status" value="1"/>
</dbReference>
<gene>
    <name evidence="1" type="primary">rplT</name>
    <name type="ordered locus">Sbal195_2327</name>
</gene>